<accession>Q6Q137</accession>
<dbReference type="EMBL" id="AY568576">
    <property type="protein sequence ID" value="AAS73247.1"/>
    <property type="status" value="ALT_INIT"/>
    <property type="molecule type" value="mRNA"/>
</dbReference>
<dbReference type="RefSeq" id="NP_001001168.1">
    <property type="nucleotide sequence ID" value="NM_001001168.1"/>
</dbReference>
<dbReference type="SMR" id="Q6Q137"/>
<dbReference type="FunCoup" id="Q6Q137">
    <property type="interactions" value="2526"/>
</dbReference>
<dbReference type="STRING" id="9913.ENSBTAP00000062857"/>
<dbReference type="PaxDb" id="9913-ENSBTAP00000001568"/>
<dbReference type="PeptideAtlas" id="Q6Q137"/>
<dbReference type="Ensembl" id="ENSBTAT00000001568.7">
    <property type="protein sequence ID" value="ENSBTAP00000001568.7"/>
    <property type="gene ID" value="ENSBTAG00000001182.7"/>
</dbReference>
<dbReference type="GeneID" id="408000"/>
<dbReference type="KEGG" id="bta:408000"/>
<dbReference type="CTD" id="989"/>
<dbReference type="VGNC" id="VGNC:53670">
    <property type="gene designation" value="SEPTIN7"/>
</dbReference>
<dbReference type="eggNOG" id="KOG2655">
    <property type="taxonomic scope" value="Eukaryota"/>
</dbReference>
<dbReference type="GeneTree" id="ENSGT00940000154222"/>
<dbReference type="InParanoid" id="Q6Q137"/>
<dbReference type="OrthoDB" id="416553at2759"/>
<dbReference type="CD-CODE" id="D7FE2080">
    <property type="entry name" value="Nucleolus"/>
</dbReference>
<dbReference type="Proteomes" id="UP000009136">
    <property type="component" value="Chromosome 4"/>
</dbReference>
<dbReference type="GO" id="GO:0005930">
    <property type="term" value="C:axoneme"/>
    <property type="evidence" value="ECO:0000250"/>
    <property type="project" value="UniProtKB"/>
</dbReference>
<dbReference type="GO" id="GO:0032153">
    <property type="term" value="C:cell division site"/>
    <property type="evidence" value="ECO:0000318"/>
    <property type="project" value="GO_Central"/>
</dbReference>
<dbReference type="GO" id="GO:0032154">
    <property type="term" value="C:cleavage furrow"/>
    <property type="evidence" value="ECO:0007669"/>
    <property type="project" value="UniProtKB-SubCell"/>
</dbReference>
<dbReference type="GO" id="GO:0000776">
    <property type="term" value="C:kinetochore"/>
    <property type="evidence" value="ECO:0007669"/>
    <property type="project" value="UniProtKB-KW"/>
</dbReference>
<dbReference type="GO" id="GO:0015630">
    <property type="term" value="C:microtubule cytoskeleton"/>
    <property type="evidence" value="ECO:0000318"/>
    <property type="project" value="GO_Central"/>
</dbReference>
<dbReference type="GO" id="GO:0030496">
    <property type="term" value="C:midbody"/>
    <property type="evidence" value="ECO:0007669"/>
    <property type="project" value="UniProtKB-SubCell"/>
</dbReference>
<dbReference type="GO" id="GO:0097730">
    <property type="term" value="C:non-motile cilium"/>
    <property type="evidence" value="ECO:0007669"/>
    <property type="project" value="Ensembl"/>
</dbReference>
<dbReference type="GO" id="GO:0005634">
    <property type="term" value="C:nucleus"/>
    <property type="evidence" value="ECO:0007669"/>
    <property type="project" value="Ensembl"/>
</dbReference>
<dbReference type="GO" id="GO:0031105">
    <property type="term" value="C:septin complex"/>
    <property type="evidence" value="ECO:0000250"/>
    <property type="project" value="UniProtKB"/>
</dbReference>
<dbReference type="GO" id="GO:0005940">
    <property type="term" value="C:septin ring"/>
    <property type="evidence" value="ECO:0000318"/>
    <property type="project" value="GO_Central"/>
</dbReference>
<dbReference type="GO" id="GO:0097227">
    <property type="term" value="C:sperm annulus"/>
    <property type="evidence" value="ECO:0007669"/>
    <property type="project" value="Ensembl"/>
</dbReference>
<dbReference type="GO" id="GO:0005819">
    <property type="term" value="C:spindle"/>
    <property type="evidence" value="ECO:0007669"/>
    <property type="project" value="UniProtKB-SubCell"/>
</dbReference>
<dbReference type="GO" id="GO:0001725">
    <property type="term" value="C:stress fiber"/>
    <property type="evidence" value="ECO:0007669"/>
    <property type="project" value="Ensembl"/>
</dbReference>
<dbReference type="GO" id="GO:0005525">
    <property type="term" value="F:GTP binding"/>
    <property type="evidence" value="ECO:0007669"/>
    <property type="project" value="UniProtKB-KW"/>
</dbReference>
<dbReference type="GO" id="GO:0003924">
    <property type="term" value="F:GTPase activity"/>
    <property type="evidence" value="ECO:0000318"/>
    <property type="project" value="GO_Central"/>
</dbReference>
<dbReference type="GO" id="GO:0042802">
    <property type="term" value="F:identical protein binding"/>
    <property type="evidence" value="ECO:0007669"/>
    <property type="project" value="Ensembl"/>
</dbReference>
<dbReference type="GO" id="GO:0060090">
    <property type="term" value="F:molecular adaptor activity"/>
    <property type="evidence" value="ECO:0000318"/>
    <property type="project" value="GO_Central"/>
</dbReference>
<dbReference type="GO" id="GO:0030154">
    <property type="term" value="P:cell differentiation"/>
    <property type="evidence" value="ECO:0007669"/>
    <property type="project" value="UniProtKB-KW"/>
</dbReference>
<dbReference type="GO" id="GO:0060271">
    <property type="term" value="P:cilium assembly"/>
    <property type="evidence" value="ECO:0000250"/>
    <property type="project" value="UniProtKB"/>
</dbReference>
<dbReference type="GO" id="GO:0061640">
    <property type="term" value="P:cytoskeleton-dependent cytokinesis"/>
    <property type="evidence" value="ECO:0000318"/>
    <property type="project" value="GO_Central"/>
</dbReference>
<dbReference type="GO" id="GO:1902857">
    <property type="term" value="P:positive regulation of non-motile cilium assembly"/>
    <property type="evidence" value="ECO:0007669"/>
    <property type="project" value="Ensembl"/>
</dbReference>
<dbReference type="GO" id="GO:0008104">
    <property type="term" value="P:protein localization"/>
    <property type="evidence" value="ECO:0000318"/>
    <property type="project" value="GO_Central"/>
</dbReference>
<dbReference type="GO" id="GO:0016476">
    <property type="term" value="P:regulation of embryonic cell shape"/>
    <property type="evidence" value="ECO:0000250"/>
    <property type="project" value="UniProtKB"/>
</dbReference>
<dbReference type="GO" id="GO:0007283">
    <property type="term" value="P:spermatogenesis"/>
    <property type="evidence" value="ECO:0007669"/>
    <property type="project" value="UniProtKB-KW"/>
</dbReference>
<dbReference type="CDD" id="cd01850">
    <property type="entry name" value="CDC_Septin"/>
    <property type="match status" value="1"/>
</dbReference>
<dbReference type="FunFam" id="3.40.50.300:FF:000162">
    <property type="entry name" value="septin-7 isoform X1"/>
    <property type="match status" value="1"/>
</dbReference>
<dbReference type="Gene3D" id="3.40.50.300">
    <property type="entry name" value="P-loop containing nucleotide triphosphate hydrolases"/>
    <property type="match status" value="1"/>
</dbReference>
<dbReference type="InterPro" id="IPR030379">
    <property type="entry name" value="G_SEPTIN_dom"/>
</dbReference>
<dbReference type="InterPro" id="IPR027417">
    <property type="entry name" value="P-loop_NTPase"/>
</dbReference>
<dbReference type="InterPro" id="IPR016491">
    <property type="entry name" value="Septin"/>
</dbReference>
<dbReference type="InterPro" id="IPR008115">
    <property type="entry name" value="Septin7"/>
</dbReference>
<dbReference type="PANTHER" id="PTHR18884">
    <property type="entry name" value="SEPTIN"/>
    <property type="match status" value="1"/>
</dbReference>
<dbReference type="Pfam" id="PF00735">
    <property type="entry name" value="Septin"/>
    <property type="match status" value="1"/>
</dbReference>
<dbReference type="PIRSF" id="PIRSF006698">
    <property type="entry name" value="Septin"/>
    <property type="match status" value="1"/>
</dbReference>
<dbReference type="PRINTS" id="PR01742">
    <property type="entry name" value="SEPTIN7"/>
</dbReference>
<dbReference type="SUPFAM" id="SSF52540">
    <property type="entry name" value="P-loop containing nucleoside triphosphate hydrolases"/>
    <property type="match status" value="1"/>
</dbReference>
<dbReference type="PROSITE" id="PS51719">
    <property type="entry name" value="G_SEPTIN"/>
    <property type="match status" value="1"/>
</dbReference>
<gene>
    <name evidence="3" type="primary">SEPTIN7</name>
    <name type="synonym">CDC10</name>
    <name type="synonym">SEPT7</name>
</gene>
<proteinExistence type="evidence at transcript level"/>
<evidence type="ECO:0000250" key="1"/>
<evidence type="ECO:0000250" key="2">
    <source>
        <dbReference type="UniProtKB" id="O55131"/>
    </source>
</evidence>
<evidence type="ECO:0000250" key="3">
    <source>
        <dbReference type="UniProtKB" id="Q16181"/>
    </source>
</evidence>
<evidence type="ECO:0000255" key="4"/>
<evidence type="ECO:0000255" key="5">
    <source>
        <dbReference type="PROSITE-ProRule" id="PRU01056"/>
    </source>
</evidence>
<evidence type="ECO:0000256" key="6">
    <source>
        <dbReference type="SAM" id="MobiDB-lite"/>
    </source>
</evidence>
<evidence type="ECO:0000305" key="7"/>
<feature type="initiator methionine" description="Removed" evidence="3">
    <location>
        <position position="1"/>
    </location>
</feature>
<feature type="chain" id="PRO_0000173527" description="Septin-7">
    <location>
        <begin position="2"/>
        <end position="437"/>
    </location>
</feature>
<feature type="domain" description="Septin-type G" evidence="5">
    <location>
        <begin position="47"/>
        <end position="316"/>
    </location>
</feature>
<feature type="region of interest" description="Interaction with SEPTIN12" evidence="3">
    <location>
        <begin position="47"/>
        <end position="317"/>
    </location>
</feature>
<feature type="region of interest" description="G1 motif" evidence="5">
    <location>
        <begin position="57"/>
        <end position="64"/>
    </location>
</feature>
<feature type="region of interest" description="G3 motif" evidence="5">
    <location>
        <begin position="113"/>
        <end position="116"/>
    </location>
</feature>
<feature type="region of interest" description="G4 motif" evidence="5">
    <location>
        <begin position="194"/>
        <end position="197"/>
    </location>
</feature>
<feature type="region of interest" description="Disordered" evidence="6">
    <location>
        <begin position="378"/>
        <end position="437"/>
    </location>
</feature>
<feature type="coiled-coil region" evidence="4">
    <location>
        <begin position="332"/>
        <end position="433"/>
    </location>
</feature>
<feature type="compositionally biased region" description="Basic and acidic residues" evidence="6">
    <location>
        <begin position="378"/>
        <end position="410"/>
    </location>
</feature>
<feature type="binding site" evidence="1">
    <location>
        <begin position="57"/>
        <end position="64"/>
    </location>
    <ligand>
        <name>GTP</name>
        <dbReference type="ChEBI" id="CHEBI:37565"/>
    </ligand>
</feature>
<feature type="binding site" evidence="1">
    <location>
        <position position="90"/>
    </location>
    <ligand>
        <name>GTP</name>
        <dbReference type="ChEBI" id="CHEBI:37565"/>
    </ligand>
</feature>
<feature type="binding site" evidence="1">
    <location>
        <position position="116"/>
    </location>
    <ligand>
        <name>GTP</name>
        <dbReference type="ChEBI" id="CHEBI:37565"/>
    </ligand>
</feature>
<feature type="binding site" evidence="1">
    <location>
        <begin position="195"/>
        <end position="203"/>
    </location>
    <ligand>
        <name>GTP</name>
        <dbReference type="ChEBI" id="CHEBI:37565"/>
    </ligand>
</feature>
<feature type="binding site" evidence="1">
    <location>
        <position position="250"/>
    </location>
    <ligand>
        <name>GTP</name>
        <dbReference type="ChEBI" id="CHEBI:37565"/>
    </ligand>
</feature>
<feature type="binding site" evidence="1">
    <location>
        <position position="265"/>
    </location>
    <ligand>
        <name>GTP</name>
        <dbReference type="ChEBI" id="CHEBI:37565"/>
    </ligand>
</feature>
<feature type="modified residue" description="N-acetylserine" evidence="3">
    <location>
        <position position="2"/>
    </location>
</feature>
<feature type="modified residue" description="Phosphotyrosine" evidence="2">
    <location>
        <position position="30"/>
    </location>
</feature>
<feature type="modified residue" description="Phosphoserine" evidence="2">
    <location>
        <position position="77"/>
    </location>
</feature>
<feature type="modified residue" description="Phosphothreonine" evidence="3">
    <location>
        <position position="228"/>
    </location>
</feature>
<feature type="modified residue" description="Phosphoserine" evidence="3">
    <location>
        <position position="334"/>
    </location>
</feature>
<feature type="modified residue" description="N6-acetyllysine" evidence="2">
    <location>
        <position position="373"/>
    </location>
</feature>
<feature type="modified residue" description="Phosphoserine" evidence="3">
    <location>
        <position position="424"/>
    </location>
</feature>
<feature type="modified residue" description="Phosphothreonine" evidence="3">
    <location>
        <position position="426"/>
    </location>
</feature>
<protein>
    <recommendedName>
        <fullName>Septin-7</fullName>
    </recommendedName>
    <alternativeName>
        <fullName>CDC10 protein homolog</fullName>
    </alternativeName>
</protein>
<keyword id="KW-0007">Acetylation</keyword>
<keyword id="KW-0131">Cell cycle</keyword>
<keyword id="KW-0132">Cell division</keyword>
<keyword id="KW-0966">Cell projection</keyword>
<keyword id="KW-0137">Centromere</keyword>
<keyword id="KW-0158">Chromosome</keyword>
<keyword id="KW-0969">Cilium</keyword>
<keyword id="KW-0175">Coiled coil</keyword>
<keyword id="KW-0963">Cytoplasm</keyword>
<keyword id="KW-0206">Cytoskeleton</keyword>
<keyword id="KW-0221">Differentiation</keyword>
<keyword id="KW-0282">Flagellum</keyword>
<keyword id="KW-0342">GTP-binding</keyword>
<keyword id="KW-0995">Kinetochore</keyword>
<keyword id="KW-0498">Mitosis</keyword>
<keyword id="KW-0547">Nucleotide-binding</keyword>
<keyword id="KW-0597">Phosphoprotein</keyword>
<keyword id="KW-1185">Reference proteome</keyword>
<keyword id="KW-0744">Spermatogenesis</keyword>
<organism>
    <name type="scientific">Bos taurus</name>
    <name type="common">Bovine</name>
    <dbReference type="NCBI Taxonomy" id="9913"/>
    <lineage>
        <taxon>Eukaryota</taxon>
        <taxon>Metazoa</taxon>
        <taxon>Chordata</taxon>
        <taxon>Craniata</taxon>
        <taxon>Vertebrata</taxon>
        <taxon>Euteleostomi</taxon>
        <taxon>Mammalia</taxon>
        <taxon>Eutheria</taxon>
        <taxon>Laurasiatheria</taxon>
        <taxon>Artiodactyla</taxon>
        <taxon>Ruminantia</taxon>
        <taxon>Pecora</taxon>
        <taxon>Bovidae</taxon>
        <taxon>Bovinae</taxon>
        <taxon>Bos</taxon>
    </lineage>
</organism>
<sequence length="437" mass="50680">MSVSARSAAAEERSVNSSTMVAQQKNLEGYVGFANLPNQVYRKSVKRGFEFTLMVVGESGLGKSTLINSLFLTDLYSPEYPGPSHRIKKTVQVEQSKVLIKEGGVQLLLTIVDTPGFGDAVDNSNCWQPVIDYIDSKFEDYLNAESRVNRRQMPDNRVQCCLYFIAPSGHGLKPLDIEFMKRLHEKVNIIPLIAKADTLTPEECQQFKKQIMKEIQEHKIKIYEFPETDDEEENKLVKKIKDRLPLAVVGSNTIIEVNGKRVRGRQYPWGVAEVENGEHCDFTILRNMLIRTHMQDLKDVTNNVHYENYRSRKLAAVTYNGVDNNKNKGQLTKSPLAQMEEERREHVAKMKKMEMEMEQVFEMKVKEKVQKLKDSEAELQRRHEQMKKNLEAQHKELEEKRRQFEDEKANWEAQQRILEQQNSSRTLEKNKKKGKIF</sequence>
<comment type="function">
    <text evidence="1 3">Filament-forming cytoskeletal GTPase. Required for normal organization of the actin cytoskeleton. Required for normal progress through mitosis. Involved in cytokinesis. Required for normal association of CENPE with the kinetochore. Plays a role in ciliogenesis and collective cell movements. Forms a filamentous structure with SEPTIN12, SEPTIN6, SEPTIN2 and probably SEPTIN4 at the sperm annulus which is required for the structural integrity and motility of the sperm tail during postmeiotic differentiation (By similarity).</text>
</comment>
<comment type="subunit">
    <text evidence="1 3">Septins polymerize into heterooligomeric protein complexes that form filaments, and associate with cellular membranes, actin filaments and microtubules. GTPase activity is required for filament formation. Filaments are assembled from asymmetrical heterotrimers, composed of SEPTIN2, SEPTIN6 and SEPTIN7 that associate head-to-head to form a hexameric unit. Within the trimer, directly interacts with SEPTIN6, while interaction with SEPTIN2 seems indirect. In the absence of SEPTIN6, forms homodimers. Interacts directly with CENPE and links CENPE to septin filaments composed of SEPTIN2, SEPTIN6 and SEPTIN7. Interacts with SEPTIN5, SEPTIN8, SEPTIN9 and SEPTIN11. Component of a septin core octameric complex consisting of SEPTIN12, SEPTIN7, SEPTIN6 and SEPTIN2 or SEPTIN4 in the order 12-7-6-2-2-6-7-12 or 12-7-6-4-4-6-7-12 and located in the sperm annulus; the SEPTIN12:SEPTIN7 association is mediated by the respective GTP-binding domains (By similarity).</text>
</comment>
<comment type="subcellular location">
    <subcellularLocation>
        <location>Cytoplasm</location>
    </subcellularLocation>
    <subcellularLocation>
        <location evidence="1">Chromosome</location>
        <location evidence="1">Centromere</location>
        <location evidence="1">Kinetochore</location>
    </subcellularLocation>
    <subcellularLocation>
        <location evidence="1">Cytoplasm</location>
        <location evidence="1">Cytoskeleton</location>
        <location evidence="1">Spindle</location>
    </subcellularLocation>
    <subcellularLocation>
        <location evidence="1">Cleavage furrow</location>
    </subcellularLocation>
    <subcellularLocation>
        <location evidence="1">Midbody</location>
    </subcellularLocation>
    <subcellularLocation>
        <location evidence="1">Cytoplasm</location>
        <location evidence="1">Cytoskeleton</location>
        <location evidence="1">Cilium axoneme</location>
    </subcellularLocation>
    <subcellularLocation>
        <location evidence="3">Cell projection</location>
        <location evidence="3">Cilium</location>
        <location evidence="3">Flagellum</location>
    </subcellularLocation>
    <text evidence="1 3">Distributed throughout the cytoplasm in prometaphase cells. Associated with the spindle during metaphase. Associated with the central spindle and at the cleavage furrow in anaphase cells. Detected at the midbody in telophase. Associated with actin stress fibers. Found in the sperm annulus (By similarity).</text>
</comment>
<comment type="miscellaneous">
    <text evidence="1">Coordinated expression with SEPTIN2 and SEPTIN6.</text>
</comment>
<comment type="similarity">
    <text evidence="5">Belongs to the TRAFAC class TrmE-Era-EngA-EngB-Septin-like GTPase superfamily. Septin GTPase family.</text>
</comment>
<comment type="sequence caution" evidence="7">
    <conflict type="erroneous initiation">
        <sequence resource="EMBL-CDS" id="AAS73247"/>
    </conflict>
    <text>Truncated N-terminus.</text>
</comment>
<name>SEPT7_BOVIN</name>
<reference key="1">
    <citation type="submission" date="2004-03" db="EMBL/GenBank/DDBJ databases">
        <authorList>
            <person name="Oberg E.A."/>
            <person name="Medrano J.F."/>
            <person name="DeNise S.K."/>
        </authorList>
    </citation>
    <scope>NUCLEOTIDE SEQUENCE [MRNA]</scope>
    <source>
        <strain>Brown Swiss</strain>
    </source>
</reference>